<evidence type="ECO:0000255" key="1">
    <source>
        <dbReference type="HAMAP-Rule" id="MF_01684"/>
    </source>
</evidence>
<protein>
    <recommendedName>
        <fullName evidence="1">5'-methylthioadenosine/S-adenosylhomocysteine nucleosidase</fullName>
        <shortName evidence="1">MTA/SAH nucleosidase</shortName>
        <shortName evidence="1">MTAN</shortName>
        <ecNumber evidence="1">3.2.2.9</ecNumber>
    </recommendedName>
    <alternativeName>
        <fullName evidence="1">5'-deoxyadenosine nucleosidase</fullName>
        <shortName evidence="1">DOA nucleosidase</shortName>
        <shortName evidence="1">dAdo nucleosidase</shortName>
    </alternativeName>
    <alternativeName>
        <fullName evidence="1">5'-methylthioadenosine nucleosidase</fullName>
        <shortName evidence="1">MTA nucleosidase</shortName>
    </alternativeName>
    <alternativeName>
        <fullName evidence="1">S-adenosylhomocysteine nucleosidase</fullName>
        <shortName evidence="1">AdoHcy nucleosidase</shortName>
        <shortName evidence="1">SAH nucleosidase</shortName>
        <shortName evidence="1">SRH nucleosidase</shortName>
    </alternativeName>
</protein>
<dbReference type="EC" id="3.2.2.9" evidence="1"/>
<dbReference type="EMBL" id="CP001657">
    <property type="protein sequence ID" value="ACT14121.1"/>
    <property type="molecule type" value="Genomic_DNA"/>
</dbReference>
<dbReference type="RefSeq" id="WP_015841267.1">
    <property type="nucleotide sequence ID" value="NC_012917.1"/>
</dbReference>
<dbReference type="SMR" id="C6DC27"/>
<dbReference type="STRING" id="561230.PC1_3098"/>
<dbReference type="KEGG" id="pct:PC1_3098"/>
<dbReference type="eggNOG" id="COG0775">
    <property type="taxonomic scope" value="Bacteria"/>
</dbReference>
<dbReference type="HOGENOM" id="CLU_031248_2_2_6"/>
<dbReference type="OrthoDB" id="9792278at2"/>
<dbReference type="UniPathway" id="UPA00904">
    <property type="reaction ID" value="UER00871"/>
</dbReference>
<dbReference type="Proteomes" id="UP000002736">
    <property type="component" value="Chromosome"/>
</dbReference>
<dbReference type="GO" id="GO:0005829">
    <property type="term" value="C:cytosol"/>
    <property type="evidence" value="ECO:0007669"/>
    <property type="project" value="TreeGrafter"/>
</dbReference>
<dbReference type="GO" id="GO:0008782">
    <property type="term" value="F:adenosylhomocysteine nucleosidase activity"/>
    <property type="evidence" value="ECO:0007669"/>
    <property type="project" value="UniProtKB-UniRule"/>
</dbReference>
<dbReference type="GO" id="GO:0008930">
    <property type="term" value="F:methylthioadenosine nucleosidase activity"/>
    <property type="evidence" value="ECO:0007669"/>
    <property type="project" value="UniProtKB-UniRule"/>
</dbReference>
<dbReference type="GO" id="GO:0019509">
    <property type="term" value="P:L-methionine salvage from methylthioadenosine"/>
    <property type="evidence" value="ECO:0007669"/>
    <property type="project" value="UniProtKB-UniRule"/>
</dbReference>
<dbReference type="GO" id="GO:0019284">
    <property type="term" value="P:L-methionine salvage from S-adenosylmethionine"/>
    <property type="evidence" value="ECO:0007669"/>
    <property type="project" value="TreeGrafter"/>
</dbReference>
<dbReference type="GO" id="GO:0046124">
    <property type="term" value="P:purine deoxyribonucleoside catabolic process"/>
    <property type="evidence" value="ECO:0007669"/>
    <property type="project" value="UniProtKB-UniRule"/>
</dbReference>
<dbReference type="CDD" id="cd09008">
    <property type="entry name" value="MTAN"/>
    <property type="match status" value="1"/>
</dbReference>
<dbReference type="FunFam" id="3.40.50.1580:FF:000001">
    <property type="entry name" value="MTA/SAH nucleosidase family protein"/>
    <property type="match status" value="1"/>
</dbReference>
<dbReference type="Gene3D" id="3.40.50.1580">
    <property type="entry name" value="Nucleoside phosphorylase domain"/>
    <property type="match status" value="1"/>
</dbReference>
<dbReference type="HAMAP" id="MF_01684">
    <property type="entry name" value="Salvage_MtnN"/>
    <property type="match status" value="1"/>
</dbReference>
<dbReference type="InterPro" id="IPR010049">
    <property type="entry name" value="MTA_SAH_Nsdase"/>
</dbReference>
<dbReference type="InterPro" id="IPR000845">
    <property type="entry name" value="Nucleoside_phosphorylase_d"/>
</dbReference>
<dbReference type="InterPro" id="IPR035994">
    <property type="entry name" value="Nucleoside_phosphorylase_sf"/>
</dbReference>
<dbReference type="NCBIfam" id="TIGR01704">
    <property type="entry name" value="MTA_SAH-Nsdase"/>
    <property type="match status" value="1"/>
</dbReference>
<dbReference type="NCBIfam" id="NF004079">
    <property type="entry name" value="PRK05584.1"/>
    <property type="match status" value="1"/>
</dbReference>
<dbReference type="PANTHER" id="PTHR46832">
    <property type="entry name" value="5'-METHYLTHIOADENOSINE/S-ADENOSYLHOMOCYSTEINE NUCLEOSIDASE"/>
    <property type="match status" value="1"/>
</dbReference>
<dbReference type="PANTHER" id="PTHR46832:SF1">
    <property type="entry name" value="5'-METHYLTHIOADENOSINE_S-ADENOSYLHOMOCYSTEINE NUCLEOSIDASE"/>
    <property type="match status" value="1"/>
</dbReference>
<dbReference type="Pfam" id="PF01048">
    <property type="entry name" value="PNP_UDP_1"/>
    <property type="match status" value="1"/>
</dbReference>
<dbReference type="SUPFAM" id="SSF53167">
    <property type="entry name" value="Purine and uridine phosphorylases"/>
    <property type="match status" value="1"/>
</dbReference>
<accession>C6DC27</accession>
<organism>
    <name type="scientific">Pectobacterium carotovorum subsp. carotovorum (strain PC1)</name>
    <dbReference type="NCBI Taxonomy" id="561230"/>
    <lineage>
        <taxon>Bacteria</taxon>
        <taxon>Pseudomonadati</taxon>
        <taxon>Pseudomonadota</taxon>
        <taxon>Gammaproteobacteria</taxon>
        <taxon>Enterobacterales</taxon>
        <taxon>Pectobacteriaceae</taxon>
        <taxon>Pectobacterium</taxon>
    </lineage>
</organism>
<reference key="1">
    <citation type="submission" date="2009-07" db="EMBL/GenBank/DDBJ databases">
        <title>Complete sequence of Pectobacterium carotovorum subsp. carotovorum PC1.</title>
        <authorList>
            <consortium name="US DOE Joint Genome Institute"/>
            <person name="Lucas S."/>
            <person name="Copeland A."/>
            <person name="Lapidus A."/>
            <person name="Glavina del Rio T."/>
            <person name="Tice H."/>
            <person name="Bruce D."/>
            <person name="Goodwin L."/>
            <person name="Pitluck S."/>
            <person name="Munk A.C."/>
            <person name="Brettin T."/>
            <person name="Detter J.C."/>
            <person name="Han C."/>
            <person name="Tapia R."/>
            <person name="Larimer F."/>
            <person name="Land M."/>
            <person name="Hauser L."/>
            <person name="Kyrpides N."/>
            <person name="Mikhailova N."/>
            <person name="Balakrishnan V."/>
            <person name="Glasner J."/>
            <person name="Perna N.T."/>
        </authorList>
    </citation>
    <scope>NUCLEOTIDE SEQUENCE [LARGE SCALE GENOMIC DNA]</scope>
    <source>
        <strain>PC1</strain>
    </source>
</reference>
<proteinExistence type="inferred from homology"/>
<comment type="function">
    <text evidence="1">Catalyzes the irreversible cleavage of the glycosidic bond in both 5'-methylthioadenosine (MTA) and S-adenosylhomocysteine (SAH/AdoHcy) to adenine and the corresponding thioribose, 5'-methylthioribose and S-ribosylhomocysteine, respectively. Also cleaves 5'-deoxyadenosine, a toxic by-product of radical S-adenosylmethionine (SAM) enzymes, into 5-deoxyribose and adenine. Thus, is required for in vivo function of the radical SAM enzymes biotin synthase and lipoic acid synthase, that are inhibited by 5'-deoxyadenosine accumulation.</text>
</comment>
<comment type="catalytic activity">
    <reaction evidence="1">
        <text>S-adenosyl-L-homocysteine + H2O = S-(5-deoxy-D-ribos-5-yl)-L-homocysteine + adenine</text>
        <dbReference type="Rhea" id="RHEA:17805"/>
        <dbReference type="ChEBI" id="CHEBI:15377"/>
        <dbReference type="ChEBI" id="CHEBI:16708"/>
        <dbReference type="ChEBI" id="CHEBI:57856"/>
        <dbReference type="ChEBI" id="CHEBI:58195"/>
        <dbReference type="EC" id="3.2.2.9"/>
    </reaction>
</comment>
<comment type="catalytic activity">
    <reaction evidence="1">
        <text>S-methyl-5'-thioadenosine + H2O = 5-(methylsulfanyl)-D-ribose + adenine</text>
        <dbReference type="Rhea" id="RHEA:13617"/>
        <dbReference type="ChEBI" id="CHEBI:15377"/>
        <dbReference type="ChEBI" id="CHEBI:16708"/>
        <dbReference type="ChEBI" id="CHEBI:17509"/>
        <dbReference type="ChEBI" id="CHEBI:78440"/>
        <dbReference type="EC" id="3.2.2.9"/>
    </reaction>
</comment>
<comment type="catalytic activity">
    <reaction evidence="1">
        <text>5'-deoxyadenosine + H2O = 5-deoxy-D-ribose + adenine</text>
        <dbReference type="Rhea" id="RHEA:29859"/>
        <dbReference type="ChEBI" id="CHEBI:15377"/>
        <dbReference type="ChEBI" id="CHEBI:16708"/>
        <dbReference type="ChEBI" id="CHEBI:17319"/>
        <dbReference type="ChEBI" id="CHEBI:149540"/>
        <dbReference type="EC" id="3.2.2.9"/>
    </reaction>
    <physiologicalReaction direction="left-to-right" evidence="1">
        <dbReference type="Rhea" id="RHEA:29860"/>
    </physiologicalReaction>
</comment>
<comment type="pathway">
    <text evidence="1">Amino-acid biosynthesis; L-methionine biosynthesis via salvage pathway; S-methyl-5-thio-alpha-D-ribose 1-phosphate from S-methyl-5'-thioadenosine (hydrolase route): step 1/2.</text>
</comment>
<comment type="subunit">
    <text evidence="1">Homodimer.</text>
</comment>
<comment type="similarity">
    <text evidence="1">Belongs to the PNP/UDP phosphorylase family. MtnN subfamily.</text>
</comment>
<feature type="chain" id="PRO_1000215915" description="5'-methylthioadenosine/S-adenosylhomocysteine nucleosidase">
    <location>
        <begin position="1"/>
        <end position="232"/>
    </location>
</feature>
<feature type="active site" description="Proton acceptor" evidence="1">
    <location>
        <position position="12"/>
    </location>
</feature>
<feature type="active site" description="Proton donor" evidence="1">
    <location>
        <position position="197"/>
    </location>
</feature>
<feature type="binding site" evidence="1">
    <location>
        <position position="78"/>
    </location>
    <ligand>
        <name>substrate</name>
    </ligand>
</feature>
<feature type="binding site" evidence="1">
    <location>
        <position position="152"/>
    </location>
    <ligand>
        <name>substrate</name>
    </ligand>
</feature>
<feature type="binding site" evidence="1">
    <location>
        <begin position="173"/>
        <end position="174"/>
    </location>
    <ligand>
        <name>substrate</name>
    </ligand>
</feature>
<sequence length="232" mass="24443">MKVGIIGAMEQEVTLLRDRIENRQTFQRAGCEIYTGQINGVDVALLKSGIGKVSAALGTTLLLEHSKPDVVINTGSAGGLAPSLNVGDIVVSDEVRYHDADVTAFGYEPGQMAGCPAAFAADEKLIALAQEAIADLQLNAVRGLVVSGDAFINGAEPLARIRTTFPKAIAVEMEATAIAHVCHQFAVPFVVVRAISDVADKASHLSFDEFLSVAAQQSTRMVEAILAKLAAR</sequence>
<keyword id="KW-0028">Amino-acid biosynthesis</keyword>
<keyword id="KW-0378">Hydrolase</keyword>
<keyword id="KW-0486">Methionine biosynthesis</keyword>
<name>MTNN_PECCP</name>
<gene>
    <name evidence="1" type="primary">mtnN</name>
    <name type="ordered locus">PC1_3098</name>
</gene>